<sequence length="345" mass="38451">MSSNSSLLVAVQLCYANVNGSCVKIPFSPGSRVILYIVFGFGAVLAVFGNLLVMISILHFKQLHSPTNFLVASLACADFLVGVTVMPFSMVRTVESCWYFGRSFCTFHTCCDVAFCYSSLFHLCFISIDRYIAVTDPLVYPTKFTVSVSGICISVSWILPLMYSGAVFYTGVYDDGLEELSDALNCIGGCQTVVNQNWVLTDFLSFFIPTFIMIILYGNIFLVARRQAKKIENTGSKTESSSESYKARVARRERKAAKTLGVTVVAFMISWLPYSIDSLIDAFMGFITPACIYEICCWCAYYNSAMNPLIYALFYPWFRKAIKVIVTGQVLKNSSATMNLFSEHI</sequence>
<dbReference type="EMBL" id="AF380192">
    <property type="protein sequence ID" value="AAK71243.1"/>
    <property type="molecule type" value="Genomic_DNA"/>
</dbReference>
<dbReference type="EMBL" id="AY183470">
    <property type="protein sequence ID" value="AAO24661.1"/>
    <property type="molecule type" value="mRNA"/>
</dbReference>
<dbReference type="EMBL" id="AL513524">
    <property type="status" value="NOT_ANNOTATED_CDS"/>
    <property type="molecule type" value="Genomic_DNA"/>
</dbReference>
<dbReference type="EMBL" id="BC069157">
    <property type="protein sequence ID" value="AAH69157.1"/>
    <property type="molecule type" value="mRNA"/>
</dbReference>
<dbReference type="CCDS" id="CCDS5155.1"/>
<dbReference type="RefSeq" id="NP_778237.1">
    <property type="nucleotide sequence ID" value="NM_175067.1"/>
</dbReference>
<dbReference type="SMR" id="Q96RI8"/>
<dbReference type="FunCoup" id="Q96RI8">
    <property type="interactions" value="408"/>
</dbReference>
<dbReference type="STRING" id="9606.ENSP00000275198"/>
<dbReference type="ChEMBL" id="CHEMBL4523910"/>
<dbReference type="GlyCosmos" id="Q96RI8">
    <property type="glycosylation" value="2 sites, No reported glycans"/>
</dbReference>
<dbReference type="GlyGen" id="Q96RI8">
    <property type="glycosylation" value="3 sites"/>
</dbReference>
<dbReference type="iPTMnet" id="Q96RI8"/>
<dbReference type="PhosphoSitePlus" id="Q96RI8"/>
<dbReference type="BioMuta" id="TAAR6"/>
<dbReference type="DMDM" id="38258634"/>
<dbReference type="MassIVE" id="Q96RI8"/>
<dbReference type="PaxDb" id="9606-ENSP00000275198"/>
<dbReference type="Antibodypedia" id="19707">
    <property type="antibodies" value="93 antibodies from 22 providers"/>
</dbReference>
<dbReference type="DNASU" id="319100"/>
<dbReference type="Ensembl" id="ENST00000275198.1">
    <property type="protein sequence ID" value="ENSP00000275198.1"/>
    <property type="gene ID" value="ENSG00000146383.7"/>
</dbReference>
<dbReference type="GeneID" id="319100"/>
<dbReference type="KEGG" id="hsa:319100"/>
<dbReference type="MANE-Select" id="ENST00000275198.1">
    <property type="protein sequence ID" value="ENSP00000275198.1"/>
    <property type="RefSeq nucleotide sequence ID" value="NM_175067.1"/>
    <property type="RefSeq protein sequence ID" value="NP_778237.1"/>
</dbReference>
<dbReference type="UCSC" id="uc011eck.2">
    <property type="organism name" value="human"/>
</dbReference>
<dbReference type="AGR" id="HGNC:20978"/>
<dbReference type="CTD" id="319100"/>
<dbReference type="DisGeNET" id="319100"/>
<dbReference type="GeneCards" id="TAAR6"/>
<dbReference type="HGNC" id="HGNC:20978">
    <property type="gene designation" value="TAAR6"/>
</dbReference>
<dbReference type="HPA" id="ENSG00000146383">
    <property type="expression patterns" value="Not detected"/>
</dbReference>
<dbReference type="MIM" id="608923">
    <property type="type" value="gene"/>
</dbReference>
<dbReference type="neXtProt" id="NX_Q96RI8"/>
<dbReference type="OpenTargets" id="ENSG00000146383"/>
<dbReference type="PharmGKB" id="PA134881141"/>
<dbReference type="VEuPathDB" id="HostDB:ENSG00000146383"/>
<dbReference type="eggNOG" id="KOG3656">
    <property type="taxonomic scope" value="Eukaryota"/>
</dbReference>
<dbReference type="GeneTree" id="ENSGT00940000160008"/>
<dbReference type="HOGENOM" id="CLU_009579_11_0_1"/>
<dbReference type="InParanoid" id="Q96RI8"/>
<dbReference type="OMA" id="MIILYGN"/>
<dbReference type="OrthoDB" id="5959645at2759"/>
<dbReference type="PAN-GO" id="Q96RI8">
    <property type="GO annotations" value="1 GO annotation based on evolutionary models"/>
</dbReference>
<dbReference type="PhylomeDB" id="Q96RI8"/>
<dbReference type="TreeFam" id="TF343107"/>
<dbReference type="PathwayCommons" id="Q96RI8"/>
<dbReference type="Reactome" id="R-HSA-375280">
    <property type="pathway name" value="Amine ligand-binding receptors"/>
</dbReference>
<dbReference type="Reactome" id="R-HSA-418555">
    <property type="pathway name" value="G alpha (s) signalling events"/>
</dbReference>
<dbReference type="BioGRID-ORCS" id="319100">
    <property type="hits" value="17 hits in 1134 CRISPR screens"/>
</dbReference>
<dbReference type="GeneWiki" id="TAAR6"/>
<dbReference type="GenomeRNAi" id="319100"/>
<dbReference type="Pharos" id="Q96RI8">
    <property type="development level" value="Tbio"/>
</dbReference>
<dbReference type="PRO" id="PR:Q96RI8"/>
<dbReference type="Proteomes" id="UP000005640">
    <property type="component" value="Chromosome 6"/>
</dbReference>
<dbReference type="RNAct" id="Q96RI8">
    <property type="molecule type" value="protein"/>
</dbReference>
<dbReference type="Bgee" id="ENSG00000146383">
    <property type="expression patterns" value="Expressed in ganglionic eminence and 7 other cell types or tissues"/>
</dbReference>
<dbReference type="GO" id="GO:0005886">
    <property type="term" value="C:plasma membrane"/>
    <property type="evidence" value="ECO:0000314"/>
    <property type="project" value="UniProtKB"/>
</dbReference>
<dbReference type="GO" id="GO:0004930">
    <property type="term" value="F:G protein-coupled receptor activity"/>
    <property type="evidence" value="ECO:0000304"/>
    <property type="project" value="GDB"/>
</dbReference>
<dbReference type="GO" id="GO:0001594">
    <property type="term" value="F:trace-amine receptor activity"/>
    <property type="evidence" value="ECO:0000250"/>
    <property type="project" value="UniProtKB"/>
</dbReference>
<dbReference type="GO" id="GO:0007189">
    <property type="term" value="P:adenylate cyclase-activating G protein-coupled receptor signaling pathway"/>
    <property type="evidence" value="ECO:0000250"/>
    <property type="project" value="UniProtKB"/>
</dbReference>
<dbReference type="GO" id="GO:0007186">
    <property type="term" value="P:G protein-coupled receptor signaling pathway"/>
    <property type="evidence" value="ECO:0000318"/>
    <property type="project" value="GO_Central"/>
</dbReference>
<dbReference type="GO" id="GO:0007608">
    <property type="term" value="P:sensory perception of smell"/>
    <property type="evidence" value="ECO:0000250"/>
    <property type="project" value="UniProt"/>
</dbReference>
<dbReference type="CDD" id="cd15316">
    <property type="entry name" value="7tmA_TAAR6_8_9"/>
    <property type="match status" value="1"/>
</dbReference>
<dbReference type="FunFam" id="1.20.1070.10:FF:000030">
    <property type="entry name" value="trace amine-associated receptor 1"/>
    <property type="match status" value="1"/>
</dbReference>
<dbReference type="Gene3D" id="1.20.1070.10">
    <property type="entry name" value="Rhodopsin 7-helix transmembrane proteins"/>
    <property type="match status" value="1"/>
</dbReference>
<dbReference type="InterPro" id="IPR000276">
    <property type="entry name" value="GPCR_Rhodpsn"/>
</dbReference>
<dbReference type="InterPro" id="IPR017452">
    <property type="entry name" value="GPCR_Rhodpsn_7TM"/>
</dbReference>
<dbReference type="InterPro" id="IPR050569">
    <property type="entry name" value="TAAR"/>
</dbReference>
<dbReference type="InterPro" id="IPR009132">
    <property type="entry name" value="TAAR_fam"/>
</dbReference>
<dbReference type="PANTHER" id="PTHR24249">
    <property type="entry name" value="HISTAMINE RECEPTOR-RELATED G-PROTEIN COUPLED RECEPTOR"/>
    <property type="match status" value="1"/>
</dbReference>
<dbReference type="PANTHER" id="PTHR24249:SF271">
    <property type="entry name" value="TRACE AMINE-ASSOCIATED RECEPTOR 6"/>
    <property type="match status" value="1"/>
</dbReference>
<dbReference type="Pfam" id="PF00001">
    <property type="entry name" value="7tm_1"/>
    <property type="match status" value="1"/>
</dbReference>
<dbReference type="PRINTS" id="PR00237">
    <property type="entry name" value="GPCRRHODOPSN"/>
</dbReference>
<dbReference type="PRINTS" id="PR01830">
    <property type="entry name" value="TRACEAMINER"/>
</dbReference>
<dbReference type="SMART" id="SM01381">
    <property type="entry name" value="7TM_GPCR_Srsx"/>
    <property type="match status" value="1"/>
</dbReference>
<dbReference type="SUPFAM" id="SSF81321">
    <property type="entry name" value="Family A G protein-coupled receptor-like"/>
    <property type="match status" value="1"/>
</dbReference>
<dbReference type="PROSITE" id="PS00237">
    <property type="entry name" value="G_PROTEIN_RECEP_F1_1"/>
    <property type="match status" value="1"/>
</dbReference>
<dbReference type="PROSITE" id="PS50262">
    <property type="entry name" value="G_PROTEIN_RECEP_F1_2"/>
    <property type="match status" value="1"/>
</dbReference>
<reference key="1">
    <citation type="journal article" date="2001" name="Proc. Natl. Acad. Sci. U.S.A.">
        <title>Trace amines: identification of a family of mammalian G protein-coupled receptors.</title>
        <authorList>
            <person name="Borowsky B."/>
            <person name="Adham N."/>
            <person name="Jones K.A."/>
            <person name="Raddatz R."/>
            <person name="Artymyshyn R."/>
            <person name="Ogozalek K.L."/>
            <person name="Durkin M.M."/>
            <person name="Lakhlani P.P."/>
            <person name="Bonini J.A."/>
            <person name="Pathirana S."/>
            <person name="Boyle N."/>
            <person name="Pu X."/>
            <person name="Kouranova E."/>
            <person name="Lichtblau H."/>
            <person name="Ochoa F.Y."/>
            <person name="Branchek T.A."/>
            <person name="Gerald C."/>
        </authorList>
    </citation>
    <scope>NUCLEOTIDE SEQUENCE [GENOMIC DNA]</scope>
</reference>
<reference key="2">
    <citation type="submission" date="2002-11" db="EMBL/GenBank/DDBJ databases">
        <title>cDNA clones of human proteins involved in signal transduction sequenced by the Guthrie cDNA resource center (www.cdna.org).</title>
        <authorList>
            <person name="Kopatz S.A."/>
            <person name="Aronstam R.S."/>
            <person name="Sharma S.V."/>
        </authorList>
    </citation>
    <scope>NUCLEOTIDE SEQUENCE [LARGE SCALE MRNA]</scope>
</reference>
<reference key="3">
    <citation type="journal article" date="2003" name="Nature">
        <title>The DNA sequence and analysis of human chromosome 6.</title>
        <authorList>
            <person name="Mungall A.J."/>
            <person name="Palmer S.A."/>
            <person name="Sims S.K."/>
            <person name="Edwards C.A."/>
            <person name="Ashurst J.L."/>
            <person name="Wilming L."/>
            <person name="Jones M.C."/>
            <person name="Horton R."/>
            <person name="Hunt S.E."/>
            <person name="Scott C.E."/>
            <person name="Gilbert J.G.R."/>
            <person name="Clamp M.E."/>
            <person name="Bethel G."/>
            <person name="Milne S."/>
            <person name="Ainscough R."/>
            <person name="Almeida J.P."/>
            <person name="Ambrose K.D."/>
            <person name="Andrews T.D."/>
            <person name="Ashwell R.I.S."/>
            <person name="Babbage A.K."/>
            <person name="Bagguley C.L."/>
            <person name="Bailey J."/>
            <person name="Banerjee R."/>
            <person name="Barker D.J."/>
            <person name="Barlow K.F."/>
            <person name="Bates K."/>
            <person name="Beare D.M."/>
            <person name="Beasley H."/>
            <person name="Beasley O."/>
            <person name="Bird C.P."/>
            <person name="Blakey S.E."/>
            <person name="Bray-Allen S."/>
            <person name="Brook J."/>
            <person name="Brown A.J."/>
            <person name="Brown J.Y."/>
            <person name="Burford D.C."/>
            <person name="Burrill W."/>
            <person name="Burton J."/>
            <person name="Carder C."/>
            <person name="Carter N.P."/>
            <person name="Chapman J.C."/>
            <person name="Clark S.Y."/>
            <person name="Clark G."/>
            <person name="Clee C.M."/>
            <person name="Clegg S."/>
            <person name="Cobley V."/>
            <person name="Collier R.E."/>
            <person name="Collins J.E."/>
            <person name="Colman L.K."/>
            <person name="Corby N.R."/>
            <person name="Coville G.J."/>
            <person name="Culley K.M."/>
            <person name="Dhami P."/>
            <person name="Davies J."/>
            <person name="Dunn M."/>
            <person name="Earthrowl M.E."/>
            <person name="Ellington A.E."/>
            <person name="Evans K.A."/>
            <person name="Faulkner L."/>
            <person name="Francis M.D."/>
            <person name="Frankish A."/>
            <person name="Frankland J."/>
            <person name="French L."/>
            <person name="Garner P."/>
            <person name="Garnett J."/>
            <person name="Ghori M.J."/>
            <person name="Gilby L.M."/>
            <person name="Gillson C.J."/>
            <person name="Glithero R.J."/>
            <person name="Grafham D.V."/>
            <person name="Grant M."/>
            <person name="Gribble S."/>
            <person name="Griffiths C."/>
            <person name="Griffiths M.N.D."/>
            <person name="Hall R."/>
            <person name="Halls K.S."/>
            <person name="Hammond S."/>
            <person name="Harley J.L."/>
            <person name="Hart E.A."/>
            <person name="Heath P.D."/>
            <person name="Heathcott R."/>
            <person name="Holmes S.J."/>
            <person name="Howden P.J."/>
            <person name="Howe K.L."/>
            <person name="Howell G.R."/>
            <person name="Huckle E."/>
            <person name="Humphray S.J."/>
            <person name="Humphries M.D."/>
            <person name="Hunt A.R."/>
            <person name="Johnson C.M."/>
            <person name="Joy A.A."/>
            <person name="Kay M."/>
            <person name="Keenan S.J."/>
            <person name="Kimberley A.M."/>
            <person name="King A."/>
            <person name="Laird G.K."/>
            <person name="Langford C."/>
            <person name="Lawlor S."/>
            <person name="Leongamornlert D.A."/>
            <person name="Leversha M."/>
            <person name="Lloyd C.R."/>
            <person name="Lloyd D.M."/>
            <person name="Loveland J.E."/>
            <person name="Lovell J."/>
            <person name="Martin S."/>
            <person name="Mashreghi-Mohammadi M."/>
            <person name="Maslen G.L."/>
            <person name="Matthews L."/>
            <person name="McCann O.T."/>
            <person name="McLaren S.J."/>
            <person name="McLay K."/>
            <person name="McMurray A."/>
            <person name="Moore M.J.F."/>
            <person name="Mullikin J.C."/>
            <person name="Niblett D."/>
            <person name="Nickerson T."/>
            <person name="Novik K.L."/>
            <person name="Oliver K."/>
            <person name="Overton-Larty E.K."/>
            <person name="Parker A."/>
            <person name="Patel R."/>
            <person name="Pearce A.V."/>
            <person name="Peck A.I."/>
            <person name="Phillimore B.J.C.T."/>
            <person name="Phillips S."/>
            <person name="Plumb R.W."/>
            <person name="Porter K.M."/>
            <person name="Ramsey Y."/>
            <person name="Ranby S.A."/>
            <person name="Rice C.M."/>
            <person name="Ross M.T."/>
            <person name="Searle S.M."/>
            <person name="Sehra H.K."/>
            <person name="Sheridan E."/>
            <person name="Skuce C.D."/>
            <person name="Smith S."/>
            <person name="Smith M."/>
            <person name="Spraggon L."/>
            <person name="Squares S.L."/>
            <person name="Steward C.A."/>
            <person name="Sycamore N."/>
            <person name="Tamlyn-Hall G."/>
            <person name="Tester J."/>
            <person name="Theaker A.J."/>
            <person name="Thomas D.W."/>
            <person name="Thorpe A."/>
            <person name="Tracey A."/>
            <person name="Tromans A."/>
            <person name="Tubby B."/>
            <person name="Wall M."/>
            <person name="Wallis J.M."/>
            <person name="West A.P."/>
            <person name="White S.S."/>
            <person name="Whitehead S.L."/>
            <person name="Whittaker H."/>
            <person name="Wild A."/>
            <person name="Willey D.J."/>
            <person name="Wilmer T.E."/>
            <person name="Wood J.M."/>
            <person name="Wray P.W."/>
            <person name="Wyatt J.C."/>
            <person name="Young L."/>
            <person name="Younger R.M."/>
            <person name="Bentley D.R."/>
            <person name="Coulson A."/>
            <person name="Durbin R.M."/>
            <person name="Hubbard T."/>
            <person name="Sulston J.E."/>
            <person name="Dunham I."/>
            <person name="Rogers J."/>
            <person name="Beck S."/>
        </authorList>
    </citation>
    <scope>NUCLEOTIDE SEQUENCE [LARGE SCALE GENOMIC DNA]</scope>
</reference>
<reference key="4">
    <citation type="journal article" date="2004" name="Genome Res.">
        <title>The status, quality, and expansion of the NIH full-length cDNA project: the Mammalian Gene Collection (MGC).</title>
        <authorList>
            <consortium name="The MGC Project Team"/>
        </authorList>
    </citation>
    <scope>NUCLEOTIDE SEQUENCE [LARGE SCALE MRNA]</scope>
</reference>
<reference key="5">
    <citation type="journal article" date="2023" name="Nature">
        <title>Structural basis of amine odorant perception by a mammal olfactory receptor.</title>
        <authorList>
            <person name="Guo L."/>
            <person name="Cheng J."/>
            <person name="Lian S."/>
            <person name="Liu Q."/>
            <person name="Lu Y."/>
            <person name="Zheng Y."/>
            <person name="Zhu K."/>
            <person name="Zhang M."/>
            <person name="Kong Y."/>
            <person name="Zhang C."/>
            <person name="Rong N."/>
            <person name="Zhuang Y."/>
            <person name="Fang G."/>
            <person name="Jiang J."/>
            <person name="Zhang T."/>
            <person name="Han X."/>
            <person name="Liu Z."/>
            <person name="Xia M."/>
            <person name="Liu S."/>
            <person name="Zhang L."/>
            <person name="Liberles S.D."/>
            <person name="Yu X."/>
            <person name="Xu Y."/>
            <person name="Yang F."/>
            <person name="Li Q."/>
            <person name="Sun J.P."/>
        </authorList>
    </citation>
    <scope>SUBCELLULAR LOCATION</scope>
</reference>
<reference key="6">
    <citation type="journal article" date="2004" name="Am. J. Hum. Genet.">
        <title>Polymorphisms in the trace amine receptor 4 (TRAR4) gene on chromosome 6q23.2 are associated with susceptibility to schizophrenia.</title>
        <authorList>
            <person name="Duan J."/>
            <person name="Martinez M."/>
            <person name="Sanders A.R."/>
            <person name="Hou C."/>
            <person name="Saitou N."/>
            <person name="Kitano T."/>
            <person name="Mowry B.J."/>
            <person name="Crowe R.R."/>
            <person name="Silverman J.M."/>
            <person name="Levinson D.F."/>
            <person name="Gejman P.V."/>
        </authorList>
    </citation>
    <scope>VARIANTS THR-37; SER-165; CYS-173; VAL-228; ILE-265; TYR-291 AND ILE-326</scope>
    <scope>TISSUE SPECIFICITY</scope>
</reference>
<keyword id="KW-1003">Cell membrane</keyword>
<keyword id="KW-1015">Disulfide bond</keyword>
<keyword id="KW-0297">G-protein coupled receptor</keyword>
<keyword id="KW-0325">Glycoprotein</keyword>
<keyword id="KW-0472">Membrane</keyword>
<keyword id="KW-0675">Receptor</keyword>
<keyword id="KW-1185">Reference proteome</keyword>
<keyword id="KW-0807">Transducer</keyword>
<keyword id="KW-0812">Transmembrane</keyword>
<keyword id="KW-1133">Transmembrane helix</keyword>
<comment type="function">
    <text evidence="2">Olfactory receptor specific for trace amines, such as beta-phenylethylamine (beta-PEA). Trace amine compounds are enriched in animal body fluids and act on trace amine-associated receptors (TAARs) to elicit both intraspecific and interspecific innate behaviors. Beta-PEA-binding causes a conformation change that triggers signaling via G(s)-class of G alpha proteins (GNAL or GNAS).</text>
</comment>
<comment type="subcellular location">
    <subcellularLocation>
        <location evidence="6">Cell membrane</location>
        <topology evidence="3">Multi-pass membrane protein</topology>
    </subcellularLocation>
</comment>
<comment type="tissue specificity">
    <text evidence="5">Expressed at low abundance in various brain tissues, as well as in fetal liver, but not in the cerebellum or placenta (PubMed:15329799). In the brain, comparable levels of expression in basal ganglia, frontal cortex, substantia nigra, amygdala and hippocampus, highest expression in hippocampus and lowest expression in basal ganglia (PubMed:15329799).</text>
</comment>
<comment type="domain">
    <text evidence="1">In addition to the well known disulfide bond common to G-protein coupled receptor 1 family, trace amine-associated receptors (TAARs) contain an unique disulfide bond (Cys-22-Cys-186) connecting the N-terminus to the extracellular Loop 2 (ECL2), which is required for agonist-induced receptor activation.</text>
</comment>
<comment type="similarity">
    <text evidence="4">Belongs to the G-protein coupled receptor 1 family.</text>
</comment>
<organism>
    <name type="scientific">Homo sapiens</name>
    <name type="common">Human</name>
    <dbReference type="NCBI Taxonomy" id="9606"/>
    <lineage>
        <taxon>Eukaryota</taxon>
        <taxon>Metazoa</taxon>
        <taxon>Chordata</taxon>
        <taxon>Craniata</taxon>
        <taxon>Vertebrata</taxon>
        <taxon>Euteleostomi</taxon>
        <taxon>Mammalia</taxon>
        <taxon>Eutheria</taxon>
        <taxon>Euarchontoglires</taxon>
        <taxon>Primates</taxon>
        <taxon>Haplorrhini</taxon>
        <taxon>Catarrhini</taxon>
        <taxon>Hominidae</taxon>
        <taxon>Homo</taxon>
    </lineage>
</organism>
<protein>
    <recommendedName>
        <fullName>Trace amine-associated receptor 6</fullName>
        <shortName>TaR-6</shortName>
        <shortName>Trace amine receptor 6</shortName>
    </recommendedName>
    <alternativeName>
        <fullName evidence="7">Trace amine receptor 4</fullName>
        <shortName evidence="7">TaR-4</shortName>
    </alternativeName>
</protein>
<gene>
    <name evidence="9" type="primary">TAAR6</name>
    <name type="synonym">TA4</name>
    <name evidence="7" type="synonym">TAR4</name>
    <name evidence="8" type="synonym">TRAR4</name>
</gene>
<proteinExistence type="evidence at transcript level"/>
<accession>Q96RI8</accession>
<accession>Q5VUQ4</accession>
<feature type="chain" id="PRO_0000070158" description="Trace amine-associated receptor 6">
    <location>
        <begin position="1"/>
        <end position="345"/>
    </location>
</feature>
<feature type="topological domain" description="Extracellular" evidence="3">
    <location>
        <begin position="1"/>
        <end position="32"/>
    </location>
</feature>
<feature type="transmembrane region" description="Helical; Name=1" evidence="3">
    <location>
        <begin position="33"/>
        <end position="53"/>
    </location>
</feature>
<feature type="topological domain" description="Cytoplasmic" evidence="3">
    <location>
        <begin position="54"/>
        <end position="68"/>
    </location>
</feature>
<feature type="transmembrane region" description="Helical; Name=2" evidence="3">
    <location>
        <begin position="69"/>
        <end position="89"/>
    </location>
</feature>
<feature type="topological domain" description="Extracellular" evidence="3">
    <location>
        <begin position="90"/>
        <end position="107"/>
    </location>
</feature>
<feature type="transmembrane region" description="Helical; Name=3" evidence="3">
    <location>
        <begin position="108"/>
        <end position="128"/>
    </location>
</feature>
<feature type="topological domain" description="Cytoplasmic" evidence="3">
    <location>
        <begin position="129"/>
        <end position="147"/>
    </location>
</feature>
<feature type="transmembrane region" description="Helical; Name=4" evidence="3">
    <location>
        <begin position="148"/>
        <end position="168"/>
    </location>
</feature>
<feature type="topological domain" description="Extracellular" evidence="3">
    <location>
        <begin position="169"/>
        <end position="202"/>
    </location>
</feature>
<feature type="transmembrane region" description="Helical; Name=5" evidence="3">
    <location>
        <begin position="203"/>
        <end position="223"/>
    </location>
</feature>
<feature type="topological domain" description="Cytoplasmic" evidence="3">
    <location>
        <begin position="224"/>
        <end position="259"/>
    </location>
</feature>
<feature type="transmembrane region" description="Helical; Name=6" evidence="3">
    <location>
        <begin position="260"/>
        <end position="276"/>
    </location>
</feature>
<feature type="topological domain" description="Extracellular" evidence="3">
    <location>
        <begin position="277"/>
        <end position="282"/>
    </location>
</feature>
<feature type="transmembrane region" description="Helical; Name=7" evidence="3">
    <location>
        <begin position="283"/>
        <end position="302"/>
    </location>
</feature>
<feature type="topological domain" description="Cytoplasmic" evidence="3">
    <location>
        <begin position="303"/>
        <end position="345"/>
    </location>
</feature>
<feature type="glycosylation site" description="N-linked (GlcNAc...) asparagine" evidence="3">
    <location>
        <position position="4"/>
    </location>
</feature>
<feature type="glycosylation site" description="N-linked (GlcNAc...) asparagine" evidence="3">
    <location>
        <position position="19"/>
    </location>
</feature>
<feature type="disulfide bond" evidence="1">
    <location>
        <begin position="22"/>
        <end position="186"/>
    </location>
</feature>
<feature type="disulfide bond" evidence="4">
    <location>
        <begin position="105"/>
        <end position="190"/>
    </location>
</feature>
<feature type="sequence variant" id="VAR_019794" description="In dbSNP:rs17061399." evidence="5">
    <original>I</original>
    <variation>T</variation>
    <location>
        <position position="37"/>
    </location>
</feature>
<feature type="sequence variant" id="VAR_061227" description="In dbSNP:rs41298395.">
    <original>Y</original>
    <variation>C</variation>
    <location>
        <position position="99"/>
    </location>
</feature>
<feature type="sequence variant" id="VAR_019795" description="In dbSNP:rs17061401." evidence="5">
    <original>G</original>
    <variation>S</variation>
    <location>
        <position position="165"/>
    </location>
</feature>
<feature type="sequence variant" id="VAR_019796" description="In dbSNP:rs17061404." evidence="5">
    <original>Y</original>
    <variation>C</variation>
    <location>
        <position position="173"/>
    </location>
</feature>
<feature type="sequence variant" id="VAR_019797" description="In dbSNP:rs17061409." evidence="5">
    <original>A</original>
    <variation>V</variation>
    <location>
        <position position="228"/>
    </location>
</feature>
<feature type="sequence variant" id="VAR_019798" description="In dbSNP:rs8192624." evidence="5">
    <original>V</original>
    <variation>I</variation>
    <location>
        <position position="265"/>
    </location>
</feature>
<feature type="sequence variant" id="VAR_019799" description="In dbSNP:rs8192625." evidence="5">
    <original>C</original>
    <variation>Y</variation>
    <location>
        <position position="291"/>
    </location>
</feature>
<feature type="sequence variant" id="VAR_019800" description="In dbSNP:rs17061419." evidence="5">
    <original>V</original>
    <variation>I</variation>
    <location>
        <position position="326"/>
    </location>
</feature>
<name>TAAR6_HUMAN</name>
<evidence type="ECO:0000250" key="1">
    <source>
        <dbReference type="UniProtKB" id="Q5QD04"/>
    </source>
</evidence>
<evidence type="ECO:0000250" key="2">
    <source>
        <dbReference type="UniProtKB" id="Q5QD13"/>
    </source>
</evidence>
<evidence type="ECO:0000255" key="3"/>
<evidence type="ECO:0000255" key="4">
    <source>
        <dbReference type="PROSITE-ProRule" id="PRU00521"/>
    </source>
</evidence>
<evidence type="ECO:0000269" key="5">
    <source>
    </source>
</evidence>
<evidence type="ECO:0000269" key="6">
    <source>
    </source>
</evidence>
<evidence type="ECO:0000303" key="7">
    <source>
    </source>
</evidence>
<evidence type="ECO:0000303" key="8">
    <source>
    </source>
</evidence>
<evidence type="ECO:0000312" key="9">
    <source>
        <dbReference type="HGNC" id="HGNC:20978"/>
    </source>
</evidence>